<protein>
    <recommendedName>
        <fullName>Flagellar biosynthetic protein FlhB</fullName>
    </recommendedName>
</protein>
<name>FLHB_BUCAI</name>
<feature type="chain" id="PRO_0000180946" description="Flagellar biosynthetic protein FlhB">
    <location>
        <begin position="1"/>
        <end position="383"/>
    </location>
</feature>
<feature type="transmembrane region" description="Helical" evidence="2">
    <location>
        <begin position="35"/>
        <end position="55"/>
    </location>
</feature>
<feature type="transmembrane region" description="Helical" evidence="2">
    <location>
        <begin position="89"/>
        <end position="109"/>
    </location>
</feature>
<feature type="transmembrane region" description="Helical" evidence="2">
    <location>
        <begin position="142"/>
        <end position="162"/>
    </location>
</feature>
<feature type="transmembrane region" description="Helical" evidence="2">
    <location>
        <begin position="189"/>
        <end position="209"/>
    </location>
</feature>
<gene>
    <name type="primary">flhB</name>
    <name type="ordered locus">BU240</name>
</gene>
<proteinExistence type="inferred from homology"/>
<keyword id="KW-1005">Bacterial flagellum biogenesis</keyword>
<keyword id="KW-1006">Bacterial flagellum protein export</keyword>
<keyword id="KW-1003">Cell membrane</keyword>
<keyword id="KW-0472">Membrane</keyword>
<keyword id="KW-0653">Protein transport</keyword>
<keyword id="KW-1185">Reference proteome</keyword>
<keyword id="KW-0812">Transmembrane</keyword>
<keyword id="KW-1133">Transmembrane helix</keyword>
<keyword id="KW-0813">Transport</keyword>
<reference key="1">
    <citation type="journal article" date="2000" name="Nature">
        <title>Genome sequence of the endocellular bacterial symbiont of aphids Buchnera sp. APS.</title>
        <authorList>
            <person name="Shigenobu S."/>
            <person name="Watanabe H."/>
            <person name="Hattori M."/>
            <person name="Sakaki Y."/>
            <person name="Ishikawa H."/>
        </authorList>
    </citation>
    <scope>NUCLEOTIDE SEQUENCE [LARGE SCALE GENOMIC DNA]</scope>
    <source>
        <strain>APS</strain>
    </source>
</reference>
<organism>
    <name type="scientific">Buchnera aphidicola subsp. Acyrthosiphon pisum (strain APS)</name>
    <name type="common">Acyrthosiphon pisum symbiotic bacterium</name>
    <dbReference type="NCBI Taxonomy" id="107806"/>
    <lineage>
        <taxon>Bacteria</taxon>
        <taxon>Pseudomonadati</taxon>
        <taxon>Pseudomonadota</taxon>
        <taxon>Gammaproteobacteria</taxon>
        <taxon>Enterobacterales</taxon>
        <taxon>Erwiniaceae</taxon>
        <taxon>Buchnera</taxon>
    </lineage>
</organism>
<accession>P57334</accession>
<dbReference type="EMBL" id="BA000003">
    <property type="protein sequence ID" value="BAB12955.1"/>
    <property type="molecule type" value="Genomic_DNA"/>
</dbReference>
<dbReference type="RefSeq" id="NP_240069.1">
    <property type="nucleotide sequence ID" value="NC_002528.1"/>
</dbReference>
<dbReference type="RefSeq" id="WP_010896023.1">
    <property type="nucleotide sequence ID" value="NC_002528.1"/>
</dbReference>
<dbReference type="SMR" id="P57334"/>
<dbReference type="STRING" id="563178.BUAP5A_236"/>
<dbReference type="EnsemblBacteria" id="BAB12955">
    <property type="protein sequence ID" value="BAB12955"/>
    <property type="gene ID" value="BAB12955"/>
</dbReference>
<dbReference type="KEGG" id="buc:BU240"/>
<dbReference type="PATRIC" id="fig|107806.10.peg.253"/>
<dbReference type="eggNOG" id="COG1377">
    <property type="taxonomic scope" value="Bacteria"/>
</dbReference>
<dbReference type="HOGENOM" id="CLU_041013_1_0_6"/>
<dbReference type="Proteomes" id="UP000001806">
    <property type="component" value="Chromosome"/>
</dbReference>
<dbReference type="GO" id="GO:0005886">
    <property type="term" value="C:plasma membrane"/>
    <property type="evidence" value="ECO:0007669"/>
    <property type="project" value="UniProtKB-SubCell"/>
</dbReference>
<dbReference type="GO" id="GO:0044780">
    <property type="term" value="P:bacterial-type flagellum assembly"/>
    <property type="evidence" value="ECO:0007669"/>
    <property type="project" value="InterPro"/>
</dbReference>
<dbReference type="GO" id="GO:0009306">
    <property type="term" value="P:protein secretion"/>
    <property type="evidence" value="ECO:0007669"/>
    <property type="project" value="InterPro"/>
</dbReference>
<dbReference type="FunFam" id="3.40.1690.10:FF:000001">
    <property type="entry name" value="Flagellar biosynthetic protein FlhB"/>
    <property type="match status" value="1"/>
</dbReference>
<dbReference type="Gene3D" id="3.40.1690.10">
    <property type="entry name" value="secretion proteins EscU"/>
    <property type="match status" value="1"/>
</dbReference>
<dbReference type="InterPro" id="IPR006136">
    <property type="entry name" value="FlhB"/>
</dbReference>
<dbReference type="InterPro" id="IPR006135">
    <property type="entry name" value="T3SS_substrate_exporter"/>
</dbReference>
<dbReference type="InterPro" id="IPR029025">
    <property type="entry name" value="T3SS_substrate_exporter_C"/>
</dbReference>
<dbReference type="NCBIfam" id="TIGR00328">
    <property type="entry name" value="flhB"/>
    <property type="match status" value="1"/>
</dbReference>
<dbReference type="PANTHER" id="PTHR30531">
    <property type="entry name" value="FLAGELLAR BIOSYNTHETIC PROTEIN FLHB"/>
    <property type="match status" value="1"/>
</dbReference>
<dbReference type="PANTHER" id="PTHR30531:SF12">
    <property type="entry name" value="FLAGELLAR BIOSYNTHETIC PROTEIN FLHB"/>
    <property type="match status" value="1"/>
</dbReference>
<dbReference type="Pfam" id="PF01312">
    <property type="entry name" value="Bac_export_2"/>
    <property type="match status" value="1"/>
</dbReference>
<dbReference type="PRINTS" id="PR00950">
    <property type="entry name" value="TYPE3IMSPROT"/>
</dbReference>
<dbReference type="SUPFAM" id="SSF160544">
    <property type="entry name" value="EscU C-terminal domain-like"/>
    <property type="match status" value="1"/>
</dbReference>
<comment type="function">
    <text evidence="1">Required for formation of the rod structure in the basal body of the flagellar apparatus. Together with FliI and FliH, may constitute the export apparatus of flagellin (By similarity).</text>
</comment>
<comment type="subcellular location">
    <subcellularLocation>
        <location evidence="3">Cell membrane</location>
        <topology evidence="3">Multi-pass membrane protein</topology>
    </subcellularLocation>
</comment>
<comment type="similarity">
    <text evidence="3">Belongs to the type III secretion exporter family.</text>
</comment>
<sequence>MNHNTNEEKTEHPTEHRIRKFRKKGKTRYSRELSSLFILLVGFINLWWYRDLIVLNFSKIMSDSFLFESNDFLNNNNNLLKILMSLKEILFSFFPFLISLLIVIIIPPILFSGISLNFRSLTLNFSKLNPFHGFKRLFSFQIIVEFFKIILKLFIVSIISFWYLQFSFSEILFLVNANYVSSLSHGYNIIFSCCFLVILGLFPIVFFDIAWQQFNYYKKLKMTRQEMRDELKEKEGNPNIKMRIRQAMKAVMRRRMIINTPKADVIITNPIHYSVALKYDEKNMNAPKVIAKGIGEAAIKIQNLALKHNISIISVPSLARSLYRYSEIGQYIPGPLYKAVAEVLAWVWKVRKWKKEGGIFPEKPINISVPSELTFTGEHETND</sequence>
<evidence type="ECO:0000250" key="1"/>
<evidence type="ECO:0000255" key="2"/>
<evidence type="ECO:0000305" key="3"/>